<feature type="chain" id="PRO_1000138486" description="Anti-adapter protein IraP">
    <location>
        <begin position="1"/>
        <end position="86"/>
    </location>
</feature>
<feature type="coiled-coil region" evidence="1">
    <location>
        <begin position="1"/>
        <end position="36"/>
    </location>
</feature>
<gene>
    <name evidence="1" type="primary">iraP</name>
    <name type="ordered locus">ECUMN_0420</name>
</gene>
<comment type="function">
    <text evidence="1">Inhibits RpoS proteolysis by regulating RssB activity, thereby increasing the stability of the sigma stress factor RpoS especially during phosphate starvation, but also in stationary phase and during nitrogen starvation. Its effect on RpoS stability is due to its interaction with RssB, which probably blocks the interaction of RssB with RpoS, and the consequent delivery of the RssB-RpoS complex to the ClpXP protein degradation pathway.</text>
</comment>
<comment type="subunit">
    <text evidence="1">Interacts with RssB.</text>
</comment>
<comment type="subcellular location">
    <subcellularLocation>
        <location evidence="1">Cytoplasm</location>
    </subcellularLocation>
</comment>
<comment type="similarity">
    <text evidence="1">Belongs to the IraP family.</text>
</comment>
<evidence type="ECO:0000255" key="1">
    <source>
        <dbReference type="HAMAP-Rule" id="MF_01198"/>
    </source>
</evidence>
<proteinExistence type="inferred from homology"/>
<dbReference type="EMBL" id="CU928163">
    <property type="protein sequence ID" value="CAR11635.1"/>
    <property type="molecule type" value="Genomic_DNA"/>
</dbReference>
<dbReference type="RefSeq" id="WP_000792975.1">
    <property type="nucleotide sequence ID" value="NC_011751.1"/>
</dbReference>
<dbReference type="RefSeq" id="YP_002411183.1">
    <property type="nucleotide sequence ID" value="NC_011751.1"/>
</dbReference>
<dbReference type="SMR" id="B7N8T4"/>
<dbReference type="STRING" id="585056.ECUMN_0420"/>
<dbReference type="KEGG" id="eum:ECUMN_0420"/>
<dbReference type="PATRIC" id="fig|585056.7.peg.619"/>
<dbReference type="HOGENOM" id="CLU_169517_0_0_6"/>
<dbReference type="Proteomes" id="UP000007097">
    <property type="component" value="Chromosome"/>
</dbReference>
<dbReference type="GO" id="GO:0005737">
    <property type="term" value="C:cytoplasm"/>
    <property type="evidence" value="ECO:0007669"/>
    <property type="project" value="UniProtKB-SubCell"/>
</dbReference>
<dbReference type="GO" id="GO:0009267">
    <property type="term" value="P:cellular response to starvation"/>
    <property type="evidence" value="ECO:0007669"/>
    <property type="project" value="UniProtKB-UniRule"/>
</dbReference>
<dbReference type="HAMAP" id="MF_01198">
    <property type="entry name" value="Anti_adapt_IraP"/>
    <property type="match status" value="1"/>
</dbReference>
<dbReference type="InterPro" id="IPR019732">
    <property type="entry name" value="SigmaS_Anti-adapt_IraP"/>
</dbReference>
<dbReference type="NCBIfam" id="NF007598">
    <property type="entry name" value="PRK10244.1"/>
    <property type="match status" value="1"/>
</dbReference>
<dbReference type="Pfam" id="PF10796">
    <property type="entry name" value="Anti-adapt_IraP"/>
    <property type="match status" value="1"/>
</dbReference>
<accession>B7N8T4</accession>
<reference key="1">
    <citation type="journal article" date="2009" name="PLoS Genet.">
        <title>Organised genome dynamics in the Escherichia coli species results in highly diverse adaptive paths.</title>
        <authorList>
            <person name="Touchon M."/>
            <person name="Hoede C."/>
            <person name="Tenaillon O."/>
            <person name="Barbe V."/>
            <person name="Baeriswyl S."/>
            <person name="Bidet P."/>
            <person name="Bingen E."/>
            <person name="Bonacorsi S."/>
            <person name="Bouchier C."/>
            <person name="Bouvet O."/>
            <person name="Calteau A."/>
            <person name="Chiapello H."/>
            <person name="Clermont O."/>
            <person name="Cruveiller S."/>
            <person name="Danchin A."/>
            <person name="Diard M."/>
            <person name="Dossat C."/>
            <person name="Karoui M.E."/>
            <person name="Frapy E."/>
            <person name="Garry L."/>
            <person name="Ghigo J.M."/>
            <person name="Gilles A.M."/>
            <person name="Johnson J."/>
            <person name="Le Bouguenec C."/>
            <person name="Lescat M."/>
            <person name="Mangenot S."/>
            <person name="Martinez-Jehanne V."/>
            <person name="Matic I."/>
            <person name="Nassif X."/>
            <person name="Oztas S."/>
            <person name="Petit M.A."/>
            <person name="Pichon C."/>
            <person name="Rouy Z."/>
            <person name="Ruf C.S."/>
            <person name="Schneider D."/>
            <person name="Tourret J."/>
            <person name="Vacherie B."/>
            <person name="Vallenet D."/>
            <person name="Medigue C."/>
            <person name="Rocha E.P.C."/>
            <person name="Denamur E."/>
        </authorList>
    </citation>
    <scope>NUCLEOTIDE SEQUENCE [LARGE SCALE GENOMIC DNA]</scope>
    <source>
        <strain>UMN026 / ExPEC</strain>
    </source>
</reference>
<protein>
    <recommendedName>
        <fullName evidence="1">Anti-adapter protein IraP</fullName>
    </recommendedName>
</protein>
<name>IRAP_ECOLU</name>
<organism>
    <name type="scientific">Escherichia coli O17:K52:H18 (strain UMN026 / ExPEC)</name>
    <dbReference type="NCBI Taxonomy" id="585056"/>
    <lineage>
        <taxon>Bacteria</taxon>
        <taxon>Pseudomonadati</taxon>
        <taxon>Pseudomonadota</taxon>
        <taxon>Gammaproteobacteria</taxon>
        <taxon>Enterobacterales</taxon>
        <taxon>Enterobacteriaceae</taxon>
        <taxon>Escherichia</taxon>
    </lineage>
</organism>
<keyword id="KW-0175">Coiled coil</keyword>
<keyword id="KW-0963">Cytoplasm</keyword>
<keyword id="KW-0346">Stress response</keyword>
<sequence length="86" mass="9936">MKNLIAELLFKLAQKEEESKELCAQVEALEIIVTAMLRNMAQNDQQRLIDQVEGALYEVKPDASIPDDDTELLRNYVKKLLKHPRQ</sequence>